<proteinExistence type="inferred from homology"/>
<sequence length="68" mass="7251">MSQEILNVEGMSCGHCKSAVESALNNIDGVTSAEVNLENGQVSVQYDDSKVAVSQMKDAIEDQGYDVV</sequence>
<evidence type="ECO:0000250" key="1"/>
<evidence type="ECO:0000255" key="2">
    <source>
        <dbReference type="PROSITE-ProRule" id="PRU00280"/>
    </source>
</evidence>
<feature type="chain" id="PRO_0000351274" description="Copper chaperone CopZ">
    <location>
        <begin position="1"/>
        <end position="68"/>
    </location>
</feature>
<feature type="domain" description="HMA" evidence="2">
    <location>
        <begin position="2"/>
        <end position="68"/>
    </location>
</feature>
<feature type="binding site" evidence="2">
    <location>
        <position position="13"/>
    </location>
    <ligand>
        <name>Cu cation</name>
        <dbReference type="ChEBI" id="CHEBI:23378"/>
    </ligand>
</feature>
<feature type="binding site" evidence="2">
    <location>
        <position position="16"/>
    </location>
    <ligand>
        <name>Cu cation</name>
        <dbReference type="ChEBI" id="CHEBI:23378"/>
    </ligand>
</feature>
<name>COPZ_STAAR</name>
<comment type="function">
    <text evidence="1">Chaperone that serves for the intracellular sequestration and transport of Cu(+). Delivers Cu(+) to the copper-exporting P-type ATPase A (CopA) (By similarity).</text>
</comment>
<comment type="subcellular location">
    <subcellularLocation>
        <location evidence="1">Cytoplasm</location>
    </subcellularLocation>
</comment>
<accession>Q6GDP0</accession>
<protein>
    <recommendedName>
        <fullName>Copper chaperone CopZ</fullName>
    </recommendedName>
</protein>
<reference key="1">
    <citation type="journal article" date="2004" name="Proc. Natl. Acad. Sci. U.S.A.">
        <title>Complete genomes of two clinical Staphylococcus aureus strains: evidence for the rapid evolution of virulence and drug resistance.</title>
        <authorList>
            <person name="Holden M.T.G."/>
            <person name="Feil E.J."/>
            <person name="Lindsay J.A."/>
            <person name="Peacock S.J."/>
            <person name="Day N.P.J."/>
            <person name="Enright M.C."/>
            <person name="Foster T.J."/>
            <person name="Moore C.E."/>
            <person name="Hurst L."/>
            <person name="Atkin R."/>
            <person name="Barron A."/>
            <person name="Bason N."/>
            <person name="Bentley S.D."/>
            <person name="Chillingworth C."/>
            <person name="Chillingworth T."/>
            <person name="Churcher C."/>
            <person name="Clark L."/>
            <person name="Corton C."/>
            <person name="Cronin A."/>
            <person name="Doggett J."/>
            <person name="Dowd L."/>
            <person name="Feltwell T."/>
            <person name="Hance Z."/>
            <person name="Harris B."/>
            <person name="Hauser H."/>
            <person name="Holroyd S."/>
            <person name="Jagels K."/>
            <person name="James K.D."/>
            <person name="Lennard N."/>
            <person name="Line A."/>
            <person name="Mayes R."/>
            <person name="Moule S."/>
            <person name="Mungall K."/>
            <person name="Ormond D."/>
            <person name="Quail M.A."/>
            <person name="Rabbinowitsch E."/>
            <person name="Rutherford K.M."/>
            <person name="Sanders M."/>
            <person name="Sharp S."/>
            <person name="Simmonds M."/>
            <person name="Stevens K."/>
            <person name="Whitehead S."/>
            <person name="Barrell B.G."/>
            <person name="Spratt B.G."/>
            <person name="Parkhill J."/>
        </authorList>
    </citation>
    <scope>NUCLEOTIDE SEQUENCE [LARGE SCALE GENOMIC DNA]</scope>
    <source>
        <strain>MRSA252</strain>
    </source>
</reference>
<keyword id="KW-0143">Chaperone</keyword>
<keyword id="KW-0186">Copper</keyword>
<keyword id="KW-0963">Cytoplasm</keyword>
<keyword id="KW-0479">Metal-binding</keyword>
<gene>
    <name type="primary">copZ</name>
    <name type="ordered locus">SAR2639</name>
</gene>
<organism>
    <name type="scientific">Staphylococcus aureus (strain MRSA252)</name>
    <dbReference type="NCBI Taxonomy" id="282458"/>
    <lineage>
        <taxon>Bacteria</taxon>
        <taxon>Bacillati</taxon>
        <taxon>Bacillota</taxon>
        <taxon>Bacilli</taxon>
        <taxon>Bacillales</taxon>
        <taxon>Staphylococcaceae</taxon>
        <taxon>Staphylococcus</taxon>
    </lineage>
</organism>
<dbReference type="EMBL" id="BX571856">
    <property type="protein sequence ID" value="CAG41617.1"/>
    <property type="molecule type" value="Genomic_DNA"/>
</dbReference>
<dbReference type="RefSeq" id="WP_000076662.1">
    <property type="nucleotide sequence ID" value="NC_002952.2"/>
</dbReference>
<dbReference type="SMR" id="Q6GDP0"/>
<dbReference type="GeneID" id="98346874"/>
<dbReference type="KEGG" id="sar:SAR2639"/>
<dbReference type="HOGENOM" id="CLU_134973_10_4_9"/>
<dbReference type="Proteomes" id="UP000000596">
    <property type="component" value="Chromosome"/>
</dbReference>
<dbReference type="GO" id="GO:0005737">
    <property type="term" value="C:cytoplasm"/>
    <property type="evidence" value="ECO:0007669"/>
    <property type="project" value="UniProtKB-SubCell"/>
</dbReference>
<dbReference type="GO" id="GO:0005507">
    <property type="term" value="F:copper ion binding"/>
    <property type="evidence" value="ECO:0007669"/>
    <property type="project" value="InterPro"/>
</dbReference>
<dbReference type="CDD" id="cd00371">
    <property type="entry name" value="HMA"/>
    <property type="match status" value="1"/>
</dbReference>
<dbReference type="FunFam" id="3.30.70.100:FF:000005">
    <property type="entry name" value="Copper-exporting P-type ATPase A"/>
    <property type="match status" value="1"/>
</dbReference>
<dbReference type="Gene3D" id="3.30.70.100">
    <property type="match status" value="1"/>
</dbReference>
<dbReference type="InterPro" id="IPR049740">
    <property type="entry name" value="CopZ"/>
</dbReference>
<dbReference type="InterPro" id="IPR017969">
    <property type="entry name" value="Heavy-metal-associated_CS"/>
</dbReference>
<dbReference type="InterPro" id="IPR006122">
    <property type="entry name" value="HMA_Cu_ion-bd"/>
</dbReference>
<dbReference type="InterPro" id="IPR006121">
    <property type="entry name" value="HMA_dom"/>
</dbReference>
<dbReference type="InterPro" id="IPR036163">
    <property type="entry name" value="HMA_dom_sf"/>
</dbReference>
<dbReference type="InterPro" id="IPR001802">
    <property type="entry name" value="MerP/CopZ"/>
</dbReference>
<dbReference type="NCBIfam" id="NF033795">
    <property type="entry name" value="chaper_CopZ_Bs"/>
    <property type="match status" value="1"/>
</dbReference>
<dbReference type="NCBIfam" id="TIGR00003">
    <property type="entry name" value="copper ion binding protein"/>
    <property type="match status" value="1"/>
</dbReference>
<dbReference type="PANTHER" id="PTHR46594">
    <property type="entry name" value="P-TYPE CATION-TRANSPORTING ATPASE"/>
    <property type="match status" value="1"/>
</dbReference>
<dbReference type="PANTHER" id="PTHR46594:SF4">
    <property type="entry name" value="P-TYPE CATION-TRANSPORTING ATPASE"/>
    <property type="match status" value="1"/>
</dbReference>
<dbReference type="Pfam" id="PF00403">
    <property type="entry name" value="HMA"/>
    <property type="match status" value="1"/>
</dbReference>
<dbReference type="PRINTS" id="PR00946">
    <property type="entry name" value="HGSCAVENGER"/>
</dbReference>
<dbReference type="SUPFAM" id="SSF55008">
    <property type="entry name" value="HMA, heavy metal-associated domain"/>
    <property type="match status" value="1"/>
</dbReference>
<dbReference type="PROSITE" id="PS01047">
    <property type="entry name" value="HMA_1"/>
    <property type="match status" value="1"/>
</dbReference>
<dbReference type="PROSITE" id="PS50846">
    <property type="entry name" value="HMA_2"/>
    <property type="match status" value="1"/>
</dbReference>